<feature type="chain" id="PRO_0000309286" description="ATP-dependent Clp protease proteolytic subunit">
    <location>
        <begin position="1"/>
        <end position="196"/>
    </location>
</feature>
<feature type="active site" description="Nucleophile" evidence="1">
    <location>
        <position position="101"/>
    </location>
</feature>
<feature type="active site" evidence="1">
    <location>
        <position position="126"/>
    </location>
</feature>
<dbReference type="EC" id="3.4.21.92" evidence="1"/>
<dbReference type="EMBL" id="AP009366">
    <property type="protein sequence ID" value="BAF49795.1"/>
    <property type="molecule type" value="Genomic_DNA"/>
</dbReference>
<dbReference type="RefSeq" id="YP_001122971.1">
    <property type="nucleotide sequence ID" value="NC_009265.1"/>
</dbReference>
<dbReference type="SMR" id="A4QJE0"/>
<dbReference type="GeneID" id="4968625"/>
<dbReference type="GO" id="GO:0009570">
    <property type="term" value="C:chloroplast stroma"/>
    <property type="evidence" value="ECO:0007669"/>
    <property type="project" value="UniProtKB-SubCell"/>
</dbReference>
<dbReference type="GO" id="GO:0009368">
    <property type="term" value="C:endopeptidase Clp complex"/>
    <property type="evidence" value="ECO:0007669"/>
    <property type="project" value="TreeGrafter"/>
</dbReference>
<dbReference type="GO" id="GO:0004176">
    <property type="term" value="F:ATP-dependent peptidase activity"/>
    <property type="evidence" value="ECO:0007669"/>
    <property type="project" value="InterPro"/>
</dbReference>
<dbReference type="GO" id="GO:0051117">
    <property type="term" value="F:ATPase binding"/>
    <property type="evidence" value="ECO:0007669"/>
    <property type="project" value="TreeGrafter"/>
</dbReference>
<dbReference type="GO" id="GO:0004252">
    <property type="term" value="F:serine-type endopeptidase activity"/>
    <property type="evidence" value="ECO:0007669"/>
    <property type="project" value="UniProtKB-UniRule"/>
</dbReference>
<dbReference type="GO" id="GO:0006515">
    <property type="term" value="P:protein quality control for misfolded or incompletely synthesized proteins"/>
    <property type="evidence" value="ECO:0007669"/>
    <property type="project" value="TreeGrafter"/>
</dbReference>
<dbReference type="CDD" id="cd07017">
    <property type="entry name" value="S14_ClpP_2"/>
    <property type="match status" value="1"/>
</dbReference>
<dbReference type="FunFam" id="3.90.226.10:FF:000006">
    <property type="entry name" value="ATP-dependent Clp protease proteolytic subunit"/>
    <property type="match status" value="1"/>
</dbReference>
<dbReference type="Gene3D" id="3.90.226.10">
    <property type="entry name" value="2-enoyl-CoA Hydratase, Chain A, domain 1"/>
    <property type="match status" value="1"/>
</dbReference>
<dbReference type="HAMAP" id="MF_00444">
    <property type="entry name" value="ClpP"/>
    <property type="match status" value="1"/>
</dbReference>
<dbReference type="InterPro" id="IPR001907">
    <property type="entry name" value="ClpP"/>
</dbReference>
<dbReference type="InterPro" id="IPR029045">
    <property type="entry name" value="ClpP/crotonase-like_dom_sf"/>
</dbReference>
<dbReference type="InterPro" id="IPR023562">
    <property type="entry name" value="ClpP/TepA"/>
</dbReference>
<dbReference type="InterPro" id="IPR033135">
    <property type="entry name" value="ClpP_His_AS"/>
</dbReference>
<dbReference type="PANTHER" id="PTHR10381">
    <property type="entry name" value="ATP-DEPENDENT CLP PROTEASE PROTEOLYTIC SUBUNIT"/>
    <property type="match status" value="1"/>
</dbReference>
<dbReference type="PANTHER" id="PTHR10381:SF15">
    <property type="entry name" value="CHLOROPLASTIC ATP-DEPENDENT CLP PROTEASE PROTEOLYTIC SUBUNIT 1"/>
    <property type="match status" value="1"/>
</dbReference>
<dbReference type="Pfam" id="PF00574">
    <property type="entry name" value="CLP_protease"/>
    <property type="match status" value="1"/>
</dbReference>
<dbReference type="PRINTS" id="PR00127">
    <property type="entry name" value="CLPPROTEASEP"/>
</dbReference>
<dbReference type="SUPFAM" id="SSF52096">
    <property type="entry name" value="ClpP/crotonase"/>
    <property type="match status" value="1"/>
</dbReference>
<dbReference type="PROSITE" id="PS00382">
    <property type="entry name" value="CLP_PROTEASE_HIS"/>
    <property type="match status" value="1"/>
</dbReference>
<accession>A4QJE0</accession>
<evidence type="ECO:0000255" key="1">
    <source>
        <dbReference type="HAMAP-Rule" id="MF_00444"/>
    </source>
</evidence>
<organism>
    <name type="scientific">Aethionema cordifolium</name>
    <name type="common">Lebanon stonecress</name>
    <dbReference type="NCBI Taxonomy" id="434059"/>
    <lineage>
        <taxon>Eukaryota</taxon>
        <taxon>Viridiplantae</taxon>
        <taxon>Streptophyta</taxon>
        <taxon>Embryophyta</taxon>
        <taxon>Tracheophyta</taxon>
        <taxon>Spermatophyta</taxon>
        <taxon>Magnoliopsida</taxon>
        <taxon>eudicotyledons</taxon>
        <taxon>Gunneridae</taxon>
        <taxon>Pentapetalae</taxon>
        <taxon>rosids</taxon>
        <taxon>malvids</taxon>
        <taxon>Brassicales</taxon>
        <taxon>Brassicaceae</taxon>
        <taxon>Aethionemeae</taxon>
        <taxon>Aethionema</taxon>
    </lineage>
</organism>
<proteinExistence type="inferred from homology"/>
<sequence length="196" mass="22070">MPIGVPKVPFRSPGEGDTSWVDIYNRLYRERLFFLGQEVDTDISNQLISLMIYLSIEKDTKDLYLFINSPGGWVISGMAIYDTMQFVRPDVQTICMGLAASIASFILVGGAITKRIAFPHARVMIHQPASSFYEAQTGEFILEAEELLKLRETITRVYVQRTGKPIWVVSEDMERDVFMSATEAQAHGIVDLVAVQ</sequence>
<gene>
    <name evidence="1" type="primary">clpP</name>
</gene>
<comment type="function">
    <text evidence="1">Cleaves peptides in various proteins in a process that requires ATP hydrolysis. Has a chymotrypsin-like activity. Plays a major role in the degradation of misfolded proteins.</text>
</comment>
<comment type="catalytic activity">
    <reaction evidence="1">
        <text>Hydrolysis of proteins to small peptides in the presence of ATP and magnesium. alpha-casein is the usual test substrate. In the absence of ATP, only oligopeptides shorter than five residues are hydrolyzed (such as succinyl-Leu-Tyr-|-NHMec, and Leu-Tyr-Leu-|-Tyr-Trp, in which cleavage of the -Tyr-|-Leu- and -Tyr-|-Trp bonds also occurs).</text>
        <dbReference type="EC" id="3.4.21.92"/>
    </reaction>
</comment>
<comment type="subunit">
    <text>Component of the chloroplastic Clp protease core complex.</text>
</comment>
<comment type="subcellular location">
    <subcellularLocation>
        <location evidence="1">Plastid</location>
        <location evidence="1">Chloroplast stroma</location>
    </subcellularLocation>
</comment>
<comment type="similarity">
    <text evidence="1">Belongs to the peptidase S14 family.</text>
</comment>
<name>CLPP_AETCO</name>
<geneLocation type="chloroplast"/>
<reference key="1">
    <citation type="submission" date="2007-03" db="EMBL/GenBank/DDBJ databases">
        <title>Sequencing analysis of Aethionema coridifolium chloroplast DNA.</title>
        <authorList>
            <person name="Hosouchi T."/>
            <person name="Tsuruoka H."/>
            <person name="Kotani H."/>
        </authorList>
    </citation>
    <scope>NUCLEOTIDE SEQUENCE [LARGE SCALE GENOMIC DNA]</scope>
</reference>
<protein>
    <recommendedName>
        <fullName evidence="1">ATP-dependent Clp protease proteolytic subunit</fullName>
        <ecNumber evidence="1">3.4.21.92</ecNumber>
    </recommendedName>
    <alternativeName>
        <fullName evidence="1">Endopeptidase Clp</fullName>
    </alternativeName>
</protein>
<keyword id="KW-0150">Chloroplast</keyword>
<keyword id="KW-0378">Hydrolase</keyword>
<keyword id="KW-0934">Plastid</keyword>
<keyword id="KW-0645">Protease</keyword>
<keyword id="KW-0720">Serine protease</keyword>